<evidence type="ECO:0000255" key="1">
    <source>
        <dbReference type="HAMAP-Rule" id="MF_00368"/>
    </source>
</evidence>
<evidence type="ECO:0000305" key="2"/>
<dbReference type="EMBL" id="CP000922">
    <property type="protein sequence ID" value="ACJ32479.1"/>
    <property type="molecule type" value="Genomic_DNA"/>
</dbReference>
<dbReference type="RefSeq" id="WP_003397647.1">
    <property type="nucleotide sequence ID" value="NC_011567.1"/>
</dbReference>
<dbReference type="SMR" id="B7GJ57"/>
<dbReference type="STRING" id="491915.Aflv_0095"/>
<dbReference type="GeneID" id="7036294"/>
<dbReference type="KEGG" id="afl:Aflv_0095"/>
<dbReference type="eggNOG" id="COG0222">
    <property type="taxonomic scope" value="Bacteria"/>
</dbReference>
<dbReference type="HOGENOM" id="CLU_086499_3_2_9"/>
<dbReference type="Proteomes" id="UP000000742">
    <property type="component" value="Chromosome"/>
</dbReference>
<dbReference type="GO" id="GO:0022625">
    <property type="term" value="C:cytosolic large ribosomal subunit"/>
    <property type="evidence" value="ECO:0007669"/>
    <property type="project" value="TreeGrafter"/>
</dbReference>
<dbReference type="GO" id="GO:0003729">
    <property type="term" value="F:mRNA binding"/>
    <property type="evidence" value="ECO:0007669"/>
    <property type="project" value="TreeGrafter"/>
</dbReference>
<dbReference type="GO" id="GO:0003735">
    <property type="term" value="F:structural constituent of ribosome"/>
    <property type="evidence" value="ECO:0007669"/>
    <property type="project" value="InterPro"/>
</dbReference>
<dbReference type="GO" id="GO:0006412">
    <property type="term" value="P:translation"/>
    <property type="evidence" value="ECO:0007669"/>
    <property type="project" value="UniProtKB-UniRule"/>
</dbReference>
<dbReference type="CDD" id="cd00387">
    <property type="entry name" value="Ribosomal_L7_L12"/>
    <property type="match status" value="1"/>
</dbReference>
<dbReference type="FunFam" id="1.20.5.710:FF:000002">
    <property type="entry name" value="50S ribosomal protein L7/L12"/>
    <property type="match status" value="1"/>
</dbReference>
<dbReference type="FunFam" id="3.30.1390.10:FF:000001">
    <property type="entry name" value="50S ribosomal protein L7/L12"/>
    <property type="match status" value="1"/>
</dbReference>
<dbReference type="Gene3D" id="3.30.1390.10">
    <property type="match status" value="1"/>
</dbReference>
<dbReference type="Gene3D" id="1.20.5.710">
    <property type="entry name" value="Single helix bin"/>
    <property type="match status" value="1"/>
</dbReference>
<dbReference type="HAMAP" id="MF_00368">
    <property type="entry name" value="Ribosomal_bL12"/>
    <property type="match status" value="1"/>
</dbReference>
<dbReference type="InterPro" id="IPR000206">
    <property type="entry name" value="Ribosomal_bL12"/>
</dbReference>
<dbReference type="InterPro" id="IPR013823">
    <property type="entry name" value="Ribosomal_bL12_C"/>
</dbReference>
<dbReference type="InterPro" id="IPR014719">
    <property type="entry name" value="Ribosomal_bL12_C/ClpS-like"/>
</dbReference>
<dbReference type="InterPro" id="IPR008932">
    <property type="entry name" value="Ribosomal_bL12_oligo"/>
</dbReference>
<dbReference type="InterPro" id="IPR036235">
    <property type="entry name" value="Ribosomal_bL12_oligo_N_sf"/>
</dbReference>
<dbReference type="NCBIfam" id="TIGR00855">
    <property type="entry name" value="L12"/>
    <property type="match status" value="1"/>
</dbReference>
<dbReference type="PANTHER" id="PTHR45987">
    <property type="entry name" value="39S RIBOSOMAL PROTEIN L12"/>
    <property type="match status" value="1"/>
</dbReference>
<dbReference type="PANTHER" id="PTHR45987:SF4">
    <property type="entry name" value="LARGE RIBOSOMAL SUBUNIT PROTEIN BL12M"/>
    <property type="match status" value="1"/>
</dbReference>
<dbReference type="Pfam" id="PF00542">
    <property type="entry name" value="Ribosomal_L12"/>
    <property type="match status" value="1"/>
</dbReference>
<dbReference type="Pfam" id="PF16320">
    <property type="entry name" value="Ribosomal_L12_N"/>
    <property type="match status" value="1"/>
</dbReference>
<dbReference type="SUPFAM" id="SSF54736">
    <property type="entry name" value="ClpS-like"/>
    <property type="match status" value="1"/>
</dbReference>
<dbReference type="SUPFAM" id="SSF48300">
    <property type="entry name" value="Ribosomal protein L7/12, oligomerisation (N-terminal) domain"/>
    <property type="match status" value="1"/>
</dbReference>
<gene>
    <name evidence="1" type="primary">rplL</name>
    <name type="ordered locus">Aflv_0095</name>
</gene>
<proteinExistence type="inferred from homology"/>
<organism>
    <name type="scientific">Anoxybacillus flavithermus (strain DSM 21510 / WK1)</name>
    <dbReference type="NCBI Taxonomy" id="491915"/>
    <lineage>
        <taxon>Bacteria</taxon>
        <taxon>Bacillati</taxon>
        <taxon>Bacillota</taxon>
        <taxon>Bacilli</taxon>
        <taxon>Bacillales</taxon>
        <taxon>Anoxybacillaceae</taxon>
        <taxon>Anoxybacillus</taxon>
    </lineage>
</organism>
<accession>B7GJ57</accession>
<comment type="function">
    <text evidence="1">Forms part of the ribosomal stalk which helps the ribosome interact with GTP-bound translation factors. Is thus essential for accurate translation.</text>
</comment>
<comment type="subunit">
    <text evidence="1">Homodimer. Part of the ribosomal stalk of the 50S ribosomal subunit. Forms a multimeric L10(L12)X complex, where L10 forms an elongated spine to which 2 to 4 L12 dimers bind in a sequential fashion. Binds GTP-bound translation factors.</text>
</comment>
<comment type="similarity">
    <text evidence="1">Belongs to the bacterial ribosomal protein bL12 family.</text>
</comment>
<name>RL7_ANOFW</name>
<reference key="1">
    <citation type="journal article" date="2008" name="Genome Biol.">
        <title>Encapsulated in silica: genome, proteome and physiology of the thermophilic bacterium Anoxybacillus flavithermus WK1.</title>
        <authorList>
            <person name="Saw J.H."/>
            <person name="Mountain B.W."/>
            <person name="Feng L."/>
            <person name="Omelchenko M.V."/>
            <person name="Hou S."/>
            <person name="Saito J.A."/>
            <person name="Stott M.B."/>
            <person name="Li D."/>
            <person name="Zhao G."/>
            <person name="Wu J."/>
            <person name="Galperin M.Y."/>
            <person name="Koonin E.V."/>
            <person name="Makarova K.S."/>
            <person name="Wolf Y.I."/>
            <person name="Rigden D.J."/>
            <person name="Dunfield P.F."/>
            <person name="Wang L."/>
            <person name="Alam M."/>
        </authorList>
    </citation>
    <scope>NUCLEOTIDE SEQUENCE [LARGE SCALE GENOMIC DNA]</scope>
    <source>
        <strain>DSM 21510 / WK1</strain>
    </source>
</reference>
<sequence>MTKEQIIEAVKNMTVLELNDLVKAIEEEFGVTAAAPVVVAGGAAAGAAAEEKTEFDVILADGGAQKIKVIKVVRELTGLGLKEAKDLVDNTPKPVKEGVSKEEAEEIKAKLEEAGAKVEIK</sequence>
<feature type="chain" id="PRO_1000195765" description="Large ribosomal subunit protein bL12">
    <location>
        <begin position="1"/>
        <end position="121"/>
    </location>
</feature>
<protein>
    <recommendedName>
        <fullName evidence="1">Large ribosomal subunit protein bL12</fullName>
    </recommendedName>
    <alternativeName>
        <fullName evidence="2">50S ribosomal protein L7/L12</fullName>
    </alternativeName>
</protein>
<keyword id="KW-0687">Ribonucleoprotein</keyword>
<keyword id="KW-0689">Ribosomal protein</keyword>